<keyword id="KW-0898">Cataract</keyword>
<keyword id="KW-0225">Disease variant</keyword>
<keyword id="KW-0887">Epilepsy</keyword>
<keyword id="KW-0991">Intellectual disability</keyword>
<keyword id="KW-0444">Lipid biosynthesis</keyword>
<keyword id="KW-0443">Lipid metabolism</keyword>
<keyword id="KW-0472">Membrane</keyword>
<keyword id="KW-0521">NADP</keyword>
<keyword id="KW-0560">Oxidoreductase</keyword>
<keyword id="KW-0576">Peroxisome</keyword>
<keyword id="KW-1267">Proteomics identification</keyword>
<keyword id="KW-1185">Reference proteome</keyword>
<keyword id="KW-0812">Transmembrane</keyword>
<keyword id="KW-1133">Transmembrane helix</keyword>
<accession>Q8WVX9</accession>
<accession>D3DQW8</accession>
<accession>Q5CZA3</accession>
<protein>
    <recommendedName>
        <fullName evidence="9 10">Fatty acyl-CoA reductase 1</fullName>
        <shortName evidence="10">FAR1</shortName>
        <ecNumber evidence="3 8">1.2.1.84</ecNumber>
    </recommendedName>
    <alternativeName>
        <fullName evidence="16">Male sterility domain-containing protein 2</fullName>
    </alternativeName>
</protein>
<evidence type="ECO:0000250" key="1">
    <source>
        <dbReference type="UniProtKB" id="Q922J9"/>
    </source>
</evidence>
<evidence type="ECO:0000255" key="2"/>
<evidence type="ECO:0000269" key="3">
    <source>
    </source>
</evidence>
<evidence type="ECO:0000269" key="4">
    <source>
    </source>
</evidence>
<evidence type="ECO:0000269" key="5">
    <source>
    </source>
</evidence>
<evidence type="ECO:0000269" key="6">
    <source>
    </source>
</evidence>
<evidence type="ECO:0000269" key="7">
    <source>
    </source>
</evidence>
<evidence type="ECO:0000269" key="8">
    <source>
    </source>
</evidence>
<evidence type="ECO:0000303" key="9">
    <source>
    </source>
</evidence>
<evidence type="ECO:0000303" key="10">
    <source>
    </source>
</evidence>
<evidence type="ECO:0000305" key="11"/>
<evidence type="ECO:0000305" key="12">
    <source>
    </source>
</evidence>
<evidence type="ECO:0000305" key="13">
    <source>
    </source>
</evidence>
<evidence type="ECO:0000305" key="14">
    <source>
    </source>
</evidence>
<evidence type="ECO:0000312" key="15">
    <source>
        <dbReference type="EMBL" id="AAQ89144.1"/>
    </source>
</evidence>
<evidence type="ECO:0000312" key="16">
    <source>
        <dbReference type="HGNC" id="HGNC:26222"/>
    </source>
</evidence>
<dbReference type="EC" id="1.2.1.84" evidence="3 8"/>
<dbReference type="EMBL" id="AY600449">
    <property type="protein sequence ID" value="AAT42129.1"/>
    <property type="molecule type" value="mRNA"/>
</dbReference>
<dbReference type="EMBL" id="AY423606">
    <property type="protein sequence ID" value="AAR84086.1"/>
    <property type="molecule type" value="mRNA"/>
</dbReference>
<dbReference type="EMBL" id="AY358784">
    <property type="protein sequence ID" value="AAQ89144.1"/>
    <property type="molecule type" value="mRNA"/>
</dbReference>
<dbReference type="EMBL" id="CR936619">
    <property type="protein sequence ID" value="CAI56762.1"/>
    <property type="molecule type" value="mRNA"/>
</dbReference>
<dbReference type="EMBL" id="CH471064">
    <property type="protein sequence ID" value="EAW68492.1"/>
    <property type="molecule type" value="Genomic_DNA"/>
</dbReference>
<dbReference type="EMBL" id="CH471064">
    <property type="protein sequence ID" value="EAW68493.1"/>
    <property type="molecule type" value="Genomic_DNA"/>
</dbReference>
<dbReference type="EMBL" id="BC017377">
    <property type="protein sequence ID" value="AAH17377.1"/>
    <property type="molecule type" value="mRNA"/>
</dbReference>
<dbReference type="CCDS" id="CCDS7813.1"/>
<dbReference type="RefSeq" id="NP_115604.1">
    <property type="nucleotide sequence ID" value="NM_032228.6"/>
</dbReference>
<dbReference type="SMR" id="Q8WVX9"/>
<dbReference type="BioGRID" id="123936">
    <property type="interactions" value="117"/>
</dbReference>
<dbReference type="FunCoup" id="Q8WVX9">
    <property type="interactions" value="1625"/>
</dbReference>
<dbReference type="IntAct" id="Q8WVX9">
    <property type="interactions" value="66"/>
</dbReference>
<dbReference type="MINT" id="Q8WVX9"/>
<dbReference type="STRING" id="9606.ENSP00000346874"/>
<dbReference type="SwissLipids" id="SLP:000000208"/>
<dbReference type="iPTMnet" id="Q8WVX9"/>
<dbReference type="PhosphoSitePlus" id="Q8WVX9"/>
<dbReference type="SwissPalm" id="Q8WVX9"/>
<dbReference type="BioMuta" id="FAR1"/>
<dbReference type="DMDM" id="74730902"/>
<dbReference type="jPOST" id="Q8WVX9"/>
<dbReference type="MassIVE" id="Q8WVX9"/>
<dbReference type="PaxDb" id="9606-ENSP00000346874"/>
<dbReference type="PeptideAtlas" id="Q8WVX9"/>
<dbReference type="ProteomicsDB" id="74834"/>
<dbReference type="Pumba" id="Q8WVX9"/>
<dbReference type="Antibodypedia" id="2735">
    <property type="antibodies" value="37 antibodies from 17 providers"/>
</dbReference>
<dbReference type="DNASU" id="84188"/>
<dbReference type="Ensembl" id="ENST00000354817.8">
    <property type="protein sequence ID" value="ENSP00000346874.3"/>
    <property type="gene ID" value="ENSG00000197601.15"/>
</dbReference>
<dbReference type="Ensembl" id="ENST00000714156.1">
    <property type="protein sequence ID" value="ENSP00000519445.1"/>
    <property type="gene ID" value="ENSG00000197601.15"/>
</dbReference>
<dbReference type="GeneID" id="84188"/>
<dbReference type="KEGG" id="hsa:84188"/>
<dbReference type="MANE-Select" id="ENST00000354817.8">
    <property type="protein sequence ID" value="ENSP00000346874.3"/>
    <property type="RefSeq nucleotide sequence ID" value="NM_032228.6"/>
    <property type="RefSeq protein sequence ID" value="NP_115604.1"/>
</dbReference>
<dbReference type="UCSC" id="uc001mld.4">
    <property type="organism name" value="human"/>
</dbReference>
<dbReference type="AGR" id="HGNC:26222"/>
<dbReference type="CTD" id="84188"/>
<dbReference type="DisGeNET" id="84188"/>
<dbReference type="GeneCards" id="FAR1"/>
<dbReference type="HGNC" id="HGNC:26222">
    <property type="gene designation" value="FAR1"/>
</dbReference>
<dbReference type="HPA" id="ENSG00000197601">
    <property type="expression patterns" value="Low tissue specificity"/>
</dbReference>
<dbReference type="MalaCards" id="FAR1"/>
<dbReference type="MIM" id="616107">
    <property type="type" value="gene"/>
</dbReference>
<dbReference type="MIM" id="616154">
    <property type="type" value="phenotype"/>
</dbReference>
<dbReference type="MIM" id="619338">
    <property type="type" value="phenotype"/>
</dbReference>
<dbReference type="neXtProt" id="NX_Q8WVX9"/>
<dbReference type="OpenTargets" id="ENSG00000197601"/>
<dbReference type="Orphanet" id="438178">
    <property type="disease" value="Fatty acyl-CoA reductase 1 deficiency"/>
</dbReference>
<dbReference type="Orphanet" id="615938">
    <property type="disease" value="Spastic paraparesis-cataracts-speech delay syndrome"/>
</dbReference>
<dbReference type="PharmGKB" id="PA162388007"/>
<dbReference type="VEuPathDB" id="HostDB:ENSG00000197601"/>
<dbReference type="eggNOG" id="KOG1221">
    <property type="taxonomic scope" value="Eukaryota"/>
</dbReference>
<dbReference type="GeneTree" id="ENSGT00390000006367"/>
<dbReference type="HOGENOM" id="CLU_024661_0_0_1"/>
<dbReference type="InParanoid" id="Q8WVX9"/>
<dbReference type="OMA" id="WRDAQER"/>
<dbReference type="OrthoDB" id="429813at2759"/>
<dbReference type="PAN-GO" id="Q8WVX9">
    <property type="GO annotations" value="3 GO annotations based on evolutionary models"/>
</dbReference>
<dbReference type="PhylomeDB" id="Q8WVX9"/>
<dbReference type="TreeFam" id="TF313011"/>
<dbReference type="BioCyc" id="MetaCyc:HS16231-MONOMER"/>
<dbReference type="BRENDA" id="1.2.1.84">
    <property type="organism ID" value="2681"/>
</dbReference>
<dbReference type="PathwayCommons" id="Q8WVX9"/>
<dbReference type="Reactome" id="R-HSA-9640463">
    <property type="pathway name" value="Wax biosynthesis"/>
</dbReference>
<dbReference type="SignaLink" id="Q8WVX9"/>
<dbReference type="BioGRID-ORCS" id="84188">
    <property type="hits" value="28 hits in 1169 CRISPR screens"/>
</dbReference>
<dbReference type="ChiTaRS" id="FAR1">
    <property type="organism name" value="human"/>
</dbReference>
<dbReference type="GeneWiki" id="MLSTD2"/>
<dbReference type="GenomeRNAi" id="84188"/>
<dbReference type="Pharos" id="Q8WVX9">
    <property type="development level" value="Tbio"/>
</dbReference>
<dbReference type="PRO" id="PR:Q8WVX9"/>
<dbReference type="Proteomes" id="UP000005640">
    <property type="component" value="Chromosome 11"/>
</dbReference>
<dbReference type="RNAct" id="Q8WVX9">
    <property type="molecule type" value="protein"/>
</dbReference>
<dbReference type="Bgee" id="ENSG00000197601">
    <property type="expression patterns" value="Expressed in corpus callosum and 188 other cell types or tissues"/>
</dbReference>
<dbReference type="ExpressionAtlas" id="Q8WVX9">
    <property type="expression patterns" value="baseline and differential"/>
</dbReference>
<dbReference type="GO" id="GO:0005778">
    <property type="term" value="C:peroxisomal membrane"/>
    <property type="evidence" value="ECO:0000314"/>
    <property type="project" value="UniProtKB"/>
</dbReference>
<dbReference type="GO" id="GO:0005777">
    <property type="term" value="C:peroxisome"/>
    <property type="evidence" value="ECO:0000314"/>
    <property type="project" value="UniProtKB"/>
</dbReference>
<dbReference type="GO" id="GO:0102965">
    <property type="term" value="F:alcohol-forming long-chain fatty acyl-CoA reductase activity"/>
    <property type="evidence" value="ECO:0000314"/>
    <property type="project" value="UniProtKB"/>
</dbReference>
<dbReference type="GO" id="GO:0080019">
    <property type="term" value="F:alcohol-forming very long-chain fatty acyl-CoA reductase activity"/>
    <property type="evidence" value="ECO:0000318"/>
    <property type="project" value="GO_Central"/>
</dbReference>
<dbReference type="GO" id="GO:0016491">
    <property type="term" value="F:oxidoreductase activity"/>
    <property type="evidence" value="ECO:0000304"/>
    <property type="project" value="Reactome"/>
</dbReference>
<dbReference type="GO" id="GO:0008611">
    <property type="term" value="P:ether lipid biosynthetic process"/>
    <property type="evidence" value="ECO:0000314"/>
    <property type="project" value="UniProtKB"/>
</dbReference>
<dbReference type="GO" id="GO:0046474">
    <property type="term" value="P:glycerophospholipid biosynthetic process"/>
    <property type="evidence" value="ECO:0000314"/>
    <property type="project" value="UniProtKB"/>
</dbReference>
<dbReference type="GO" id="GO:0035336">
    <property type="term" value="P:long-chain fatty-acyl-CoA metabolic process"/>
    <property type="evidence" value="ECO:0000314"/>
    <property type="project" value="UniProtKB"/>
</dbReference>
<dbReference type="GO" id="GO:0010025">
    <property type="term" value="P:wax biosynthetic process"/>
    <property type="evidence" value="ECO:0000250"/>
    <property type="project" value="UniProtKB"/>
</dbReference>
<dbReference type="CDD" id="cd05236">
    <property type="entry name" value="FAR-N_SDR_e"/>
    <property type="match status" value="1"/>
</dbReference>
<dbReference type="CDD" id="cd09071">
    <property type="entry name" value="FAR_C"/>
    <property type="match status" value="1"/>
</dbReference>
<dbReference type="FunFam" id="3.40.50.720:FF:000123">
    <property type="entry name" value="Fatty acyl-CoA reductase"/>
    <property type="match status" value="1"/>
</dbReference>
<dbReference type="Gene3D" id="3.40.50.720">
    <property type="entry name" value="NAD(P)-binding Rossmann-like Domain"/>
    <property type="match status" value="1"/>
</dbReference>
<dbReference type="InterPro" id="IPR026055">
    <property type="entry name" value="FAR"/>
</dbReference>
<dbReference type="InterPro" id="IPR033640">
    <property type="entry name" value="FAR_C"/>
</dbReference>
<dbReference type="InterPro" id="IPR013120">
    <property type="entry name" value="Far_NAD-bd"/>
</dbReference>
<dbReference type="InterPro" id="IPR036291">
    <property type="entry name" value="NAD(P)-bd_dom_sf"/>
</dbReference>
<dbReference type="PANTHER" id="PTHR11011:SF119">
    <property type="entry name" value="FATTY ACYL-COA REDUCTASE 1"/>
    <property type="match status" value="1"/>
</dbReference>
<dbReference type="PANTHER" id="PTHR11011">
    <property type="entry name" value="MALE STERILITY PROTEIN 2-RELATED"/>
    <property type="match status" value="1"/>
</dbReference>
<dbReference type="Pfam" id="PF07993">
    <property type="entry name" value="NAD_binding_4"/>
    <property type="match status" value="1"/>
</dbReference>
<dbReference type="Pfam" id="PF03015">
    <property type="entry name" value="Sterile"/>
    <property type="match status" value="1"/>
</dbReference>
<dbReference type="SUPFAM" id="SSF51735">
    <property type="entry name" value="NAD(P)-binding Rossmann-fold domains"/>
    <property type="match status" value="1"/>
</dbReference>
<name>FACR1_HUMAN</name>
<sequence>MVSIPEYYEGKNVLLTGATGFLGKVLLEKLLRSCPKVNSVYVLVRQKAGQTPQERVEEVLSGKLFDRLRDENPDFREKIIAINSELTQPKLALSEEDKEVIIDSTNIIFHCAATVRFNENLRDAVQLNVIATRQLILLAQQMKNLEVFMHVSTAYAYCNRKHIDEVVYPPPVDPKKLIDSLEWMDDGLVNDITPKLIGDRPNTYIYTKALAEYVVQQEGAKLNVAIVRPSIVGASWKEPFPGWIDNFNGPSGLFIAAGKGILRTIRASNNALADLVPVDVVVNMSLAAAWYSGVNRPRNIMVYNCTTGSTNPFHWGEVEYHVISTFKRNPLEQAFRRPNVNLTSNHLLYHYWIAVSHKAPAFLYDIYLRMTGRSPRMMKTITRLHKAMVFLEYFTSNSWVWNTENVNMLMNQLNPEDKKTFNIDVRQLHWAEYIENYCLGTKKYVLNEEMSGLPAARKHLNKLRNIRYGFNTILVILIWRIFIARSQMARNIWYFVVSLCYKFLSYFRASSTMRY</sequence>
<reference key="1">
    <citation type="journal article" date="2004" name="J. Biol. Chem.">
        <title>Mammalian wax biosynthesis: I. Identification of two fatty acyl-coenzyme A reductases with different substrate specificities and tissue distributions.</title>
        <authorList>
            <person name="Cheng J.B."/>
            <person name="Russell D.W."/>
        </authorList>
    </citation>
    <scope>NUCLEOTIDE SEQUENCE [MRNA]</scope>
    <scope>FUNCTION</scope>
    <scope>CATALYTIC ACTIVITY</scope>
</reference>
<reference key="2">
    <citation type="submission" date="2003-09" db="EMBL/GenBank/DDBJ databases">
        <title>Cloning and characterization of a putative fatty acyl reductase.</title>
        <authorList>
            <person name="Zheng H."/>
            <person name="Xie Y."/>
            <person name="Mao Y."/>
        </authorList>
    </citation>
    <scope>NUCLEOTIDE SEQUENCE [MRNA]</scope>
</reference>
<reference key="3">
    <citation type="journal article" date="2003" name="Genome Res.">
        <title>The secreted protein discovery initiative (SPDI), a large-scale effort to identify novel human secreted and transmembrane proteins: a bioinformatics assessment.</title>
        <authorList>
            <person name="Clark H.F."/>
            <person name="Gurney A.L."/>
            <person name="Abaya E."/>
            <person name="Baker K."/>
            <person name="Baldwin D.T."/>
            <person name="Brush J."/>
            <person name="Chen J."/>
            <person name="Chow B."/>
            <person name="Chui C."/>
            <person name="Crowley C."/>
            <person name="Currell B."/>
            <person name="Deuel B."/>
            <person name="Dowd P."/>
            <person name="Eaton D."/>
            <person name="Foster J.S."/>
            <person name="Grimaldi C."/>
            <person name="Gu Q."/>
            <person name="Hass P.E."/>
            <person name="Heldens S."/>
            <person name="Huang A."/>
            <person name="Kim H.S."/>
            <person name="Klimowski L."/>
            <person name="Jin Y."/>
            <person name="Johnson S."/>
            <person name="Lee J."/>
            <person name="Lewis L."/>
            <person name="Liao D."/>
            <person name="Mark M.R."/>
            <person name="Robbie E."/>
            <person name="Sanchez C."/>
            <person name="Schoenfeld J."/>
            <person name="Seshagiri S."/>
            <person name="Simmons L."/>
            <person name="Singh J."/>
            <person name="Smith V."/>
            <person name="Stinson J."/>
            <person name="Vagts A."/>
            <person name="Vandlen R.L."/>
            <person name="Watanabe C."/>
            <person name="Wieand D."/>
            <person name="Woods K."/>
            <person name="Xie M.-H."/>
            <person name="Yansura D.G."/>
            <person name="Yi S."/>
            <person name="Yu G."/>
            <person name="Yuan J."/>
            <person name="Zhang M."/>
            <person name="Zhang Z."/>
            <person name="Goddard A.D."/>
            <person name="Wood W.I."/>
            <person name="Godowski P.J."/>
            <person name="Gray A.M."/>
        </authorList>
    </citation>
    <scope>NUCLEOTIDE SEQUENCE [LARGE SCALE MRNA]</scope>
</reference>
<reference key="4">
    <citation type="journal article" date="2007" name="BMC Genomics">
        <title>The full-ORF clone resource of the German cDNA consortium.</title>
        <authorList>
            <person name="Bechtel S."/>
            <person name="Rosenfelder H."/>
            <person name="Duda A."/>
            <person name="Schmidt C.P."/>
            <person name="Ernst U."/>
            <person name="Wellenreuther R."/>
            <person name="Mehrle A."/>
            <person name="Schuster C."/>
            <person name="Bahr A."/>
            <person name="Bloecker H."/>
            <person name="Heubner D."/>
            <person name="Hoerlein A."/>
            <person name="Michel G."/>
            <person name="Wedler H."/>
            <person name="Koehrer K."/>
            <person name="Ottenwaelder B."/>
            <person name="Poustka A."/>
            <person name="Wiemann S."/>
            <person name="Schupp I."/>
        </authorList>
    </citation>
    <scope>NUCLEOTIDE SEQUENCE [LARGE SCALE MRNA]</scope>
    <source>
        <tissue>Endometrial tumor</tissue>
    </source>
</reference>
<reference key="5">
    <citation type="submission" date="2005-09" db="EMBL/GenBank/DDBJ databases">
        <authorList>
            <person name="Mural R.J."/>
            <person name="Istrail S."/>
            <person name="Sutton G.G."/>
            <person name="Florea L."/>
            <person name="Halpern A.L."/>
            <person name="Mobarry C.M."/>
            <person name="Lippert R."/>
            <person name="Walenz B."/>
            <person name="Shatkay H."/>
            <person name="Dew I."/>
            <person name="Miller J.R."/>
            <person name="Flanigan M.J."/>
            <person name="Edwards N.J."/>
            <person name="Bolanos R."/>
            <person name="Fasulo D."/>
            <person name="Halldorsson B.V."/>
            <person name="Hannenhalli S."/>
            <person name="Turner R."/>
            <person name="Yooseph S."/>
            <person name="Lu F."/>
            <person name="Nusskern D.R."/>
            <person name="Shue B.C."/>
            <person name="Zheng X.H."/>
            <person name="Zhong F."/>
            <person name="Delcher A.L."/>
            <person name="Huson D.H."/>
            <person name="Kravitz S.A."/>
            <person name="Mouchard L."/>
            <person name="Reinert K."/>
            <person name="Remington K.A."/>
            <person name="Clark A.G."/>
            <person name="Waterman M.S."/>
            <person name="Eichler E.E."/>
            <person name="Adams M.D."/>
            <person name="Hunkapiller M.W."/>
            <person name="Myers E.W."/>
            <person name="Venter J.C."/>
        </authorList>
    </citation>
    <scope>NUCLEOTIDE SEQUENCE [LARGE SCALE GENOMIC DNA]</scope>
</reference>
<reference key="6">
    <citation type="journal article" date="2004" name="Genome Res.">
        <title>The status, quality, and expansion of the NIH full-length cDNA project: the Mammalian Gene Collection (MGC).</title>
        <authorList>
            <consortium name="The MGC Project Team"/>
        </authorList>
    </citation>
    <scope>NUCLEOTIDE SEQUENCE [LARGE SCALE MRNA]</scope>
    <source>
        <tissue>Ovary</tissue>
    </source>
</reference>
<reference key="7">
    <citation type="journal article" date="2010" name="J. Biol. Chem.">
        <title>Posttranslational regulation of fatty acyl-CoA reductase 1, Far1, controls ether glycerophospholipid synthesis.</title>
        <authorList>
            <person name="Honsho M."/>
            <person name="Asaoku S."/>
            <person name="Fujiki Y."/>
        </authorList>
    </citation>
    <scope>FUNCTION</scope>
    <scope>INDUCTION</scope>
    <scope>CATALYTIC ACTIVITY</scope>
</reference>
<reference key="8">
    <citation type="journal article" date="2011" name="BMC Syst. Biol.">
        <title>Initial characterization of the human central proteome.</title>
        <authorList>
            <person name="Burkard T.R."/>
            <person name="Planyavsky M."/>
            <person name="Kaupe I."/>
            <person name="Breitwieser F.P."/>
            <person name="Buerckstuemmer T."/>
            <person name="Bennett K.L."/>
            <person name="Superti-Furga G."/>
            <person name="Colinge J."/>
        </authorList>
    </citation>
    <scope>IDENTIFICATION BY MASS SPECTROMETRY [LARGE SCALE ANALYSIS]</scope>
</reference>
<reference key="9">
    <citation type="journal article" date="2013" name="J. Biol. Chem.">
        <title>Topogenesis and homeostasis of fatty acyl-CoA reductase 1.</title>
        <authorList>
            <person name="Honsho M."/>
            <person name="Asaoku S."/>
            <person name="Fukumoto K."/>
            <person name="Fujiki Y."/>
        </authorList>
    </citation>
    <scope>FUNCTION</scope>
    <scope>SUBCELLULAR LOCATION</scope>
    <scope>TOPOLOGY</scope>
    <scope>INTERACTION WITH PEX19</scope>
    <scope>INDUCTION</scope>
    <scope>REGION</scope>
</reference>
<reference key="10">
    <citation type="journal article" date="2022" name="FASEB J.">
        <title>Formation of fatty alcohols-components of meibum lipids-by the fatty acyl-CoA reductase FAR2 is essential for dry eye prevention.</title>
        <authorList>
            <person name="Otsuka K."/>
            <person name="Sawai-Ogawa M."/>
            <person name="Kihara A."/>
        </authorList>
    </citation>
    <scope>FUNCTION</scope>
    <scope>CATALYTIC ACTIVITY</scope>
</reference>
<reference key="11">
    <citation type="journal article" date="2014" name="Am. J. Hum. Genet.">
        <title>A peroxisomal disorder of severe intellectual disability, epilepsy, and cataracts due to fatty acyl-CoA reductase 1 deficiency.</title>
        <authorList>
            <person name="Buchert R."/>
            <person name="Tawamie H."/>
            <person name="Smith C."/>
            <person name="Uebe S."/>
            <person name="Innes A.M."/>
            <person name="Al Hallak B."/>
            <person name="Ekici A.B."/>
            <person name="Sticht H."/>
            <person name="Schwarze B."/>
            <person name="Lamont R.E."/>
            <person name="Parboosingh J.S."/>
            <person name="Bernier F.P."/>
            <person name="Abou Jamra R."/>
        </authorList>
    </citation>
    <scope>INVOLVEMENT IN PFCRD</scope>
    <scope>VARIANTS PFCRD 165-GLU--PRO-169 DELINS ASP; 263-ARG--TYR-515 DEL AND GLY-365</scope>
    <scope>CHARACTERIZATION OF VARIANTS PFCRD 165-GLU--PRO-169 DELINS ASP; 263-ARG--TYR-515 DEL AND GLY-365</scope>
</reference>
<reference key="12">
    <citation type="journal article" date="2021" name="Genet. Med.">
        <title>An autosomal dominant neurological disorder caused by de novo variants in FAR1 resulting in uncontrolled synthesis of ether lipids.</title>
        <authorList>
            <consortium name="Undiagnosed Diseases Network"/>
            <person name="Ferdinandusse S."/>
            <person name="McWalter K."/>
            <person name="Te Brinke H."/>
            <person name="Ijlst L."/>
            <person name="Mooijer P.M."/>
            <person name="Ruiter J.P.N."/>
            <person name="van Lint A.E.M."/>
            <person name="Pras-Raves M."/>
            <person name="Wever E."/>
            <person name="Millan F."/>
            <person name="Guillen Sacoto M.J."/>
            <person name="Begtrup A."/>
            <person name="Tarnopolsky M."/>
            <person name="Brady L."/>
            <person name="Ladda R.L."/>
            <person name="Sell S.L."/>
            <person name="Nowak C.B."/>
            <person name="Douglas J."/>
            <person name="Tian C."/>
            <person name="Ulm E."/>
            <person name="Perlman S."/>
            <person name="Drack A.V."/>
            <person name="Chong K."/>
            <person name="Martin N."/>
            <person name="Brault J."/>
            <person name="Brokamp E."/>
            <person name="Toro C."/>
            <person name="Gahl W.A."/>
            <person name="Macnamara E.F."/>
            <person name="Wolfe L."/>
            <person name="Waisfisz Q."/>
            <person name="Zwijnenburg P.J.G."/>
            <person name="Ziegler A."/>
            <person name="Barth M."/>
            <person name="Smith R."/>
            <person name="Ellingwood S."/>
            <person name="Gaebler-Spira D."/>
            <person name="Bakhtiari S."/>
            <person name="Kruer M.C."/>
            <person name="van Kampen A.H.C."/>
            <person name="Wanders R.J.A."/>
            <person name="Waterham H.R."/>
            <person name="Cassiman D."/>
            <person name="Vaz F.M."/>
        </authorList>
    </citation>
    <scope>VARIANTS CSPSD CYS-480; HIS-480 AND LEU-480</scope>
    <scope>CHARACTERIZATION OF VARIANTS CSPSD CYS-480 AND HIS-480</scope>
    <scope>INVOLVEMENT IN CSPSD</scope>
    <scope>FUNCTION</scope>
</reference>
<gene>
    <name evidence="16" type="primary">FAR1</name>
    <name evidence="16" type="synonym">MLSTD2</name>
    <name evidence="15" type="ORF">UNQ2423/PRO4981</name>
</gene>
<feature type="chain" id="PRO_0000261394" description="Fatty acyl-CoA reductase 1">
    <location>
        <begin position="1"/>
        <end position="515"/>
    </location>
</feature>
<feature type="topological domain" description="Cytoplasmic" evidence="5">
    <location>
        <begin position="1"/>
        <end position="465"/>
    </location>
</feature>
<feature type="transmembrane region" description="Helical" evidence="2">
    <location>
        <begin position="466"/>
        <end position="483"/>
    </location>
</feature>
<feature type="topological domain" description="Peroxisomal" evidence="5">
    <location>
        <begin position="484"/>
        <end position="515"/>
    </location>
</feature>
<feature type="region of interest" description="Necessary and sufficient for PEX19-mediated localization into peroxisome membrane" evidence="5">
    <location>
        <begin position="451"/>
        <end position="507"/>
    </location>
</feature>
<feature type="sequence variant" id="VAR_053800" description="In dbSNP:rs12793516.">
    <original>E</original>
    <variation>K</variation>
    <location>
        <position position="96"/>
    </location>
</feature>
<feature type="sequence variant" id="VAR_072692" description="In PFCRD; results in a complete loss of enzyme activity." evidence="6">
    <original>EVVYP</original>
    <variation>D</variation>
    <location>
        <begin position="165"/>
        <end position="169"/>
    </location>
</feature>
<feature type="sequence variant" id="VAR_085710" description="In PFCRD; results in a complete loss of enzyme activity." evidence="6">
    <location>
        <begin position="263"/>
        <end position="515"/>
    </location>
</feature>
<feature type="sequence variant" id="VAR_072693" description="In PFCRD; results in a complete loss of enzyme activity; dbSNP:rs724159963." evidence="6">
    <original>D</original>
    <variation>G</variation>
    <location>
        <position position="365"/>
    </location>
</feature>
<feature type="sequence variant" id="VAR_085711" description="In CSPSD; increased ether lipid biosynthetic process in patient cells; increased FAR1 protein levels in patient cells due to impaired down-regulation by plasmalogen; dbSNP:rs12799308." evidence="7">
    <original>R</original>
    <variation>C</variation>
    <location>
        <position position="480"/>
    </location>
</feature>
<feature type="sequence variant" id="VAR_085712" description="In CSPSD; increased ether lipid biosynthetic process in patient cells; increased FAR1 protein levels in patient cells due to impaired down-regulation by plasmalogen; dbSNP:rs1057517926." evidence="7">
    <original>R</original>
    <variation>H</variation>
    <location>
        <position position="480"/>
    </location>
</feature>
<feature type="sequence variant" id="VAR_085713" description="In CSPSD; dbSNP:rs1057517926." evidence="7">
    <original>R</original>
    <variation>L</variation>
    <location>
        <position position="480"/>
    </location>
</feature>
<feature type="sequence conflict" description="In Ref. 4; CAI56762." evidence="11" ref="4">
    <original>LV</original>
    <variation>PG</variation>
    <location>
        <begin position="275"/>
        <end position="276"/>
    </location>
</feature>
<organism>
    <name type="scientific">Homo sapiens</name>
    <name type="common">Human</name>
    <dbReference type="NCBI Taxonomy" id="9606"/>
    <lineage>
        <taxon>Eukaryota</taxon>
        <taxon>Metazoa</taxon>
        <taxon>Chordata</taxon>
        <taxon>Craniata</taxon>
        <taxon>Vertebrata</taxon>
        <taxon>Euteleostomi</taxon>
        <taxon>Mammalia</taxon>
        <taxon>Eutheria</taxon>
        <taxon>Euarchontoglires</taxon>
        <taxon>Primates</taxon>
        <taxon>Haplorrhini</taxon>
        <taxon>Catarrhini</taxon>
        <taxon>Hominidae</taxon>
        <taxon>Homo</taxon>
    </lineage>
</organism>
<proteinExistence type="evidence at protein level"/>
<comment type="function">
    <text evidence="1 3 4 5 7 8">Catalyzes the reduction of saturated and unsaturated C16 or C18 fatty acyl-CoA to fatty alcohols (PubMed:15220348, PubMed:24108123, PubMed:35238077). It plays an essential role in the production of ether lipids/plasmalogens which synthesis requires fatty alcohols (PubMed:20071337, PubMed:24108123, PubMed:33239752). In parallel, it is also required for wax monoesters production since fatty alcohols also constitute a substrate for their synthesis (By similarity) (PubMed:24108123, PubMed:35238077).</text>
</comment>
<comment type="catalytic activity">
    <reaction evidence="3 8">
        <text>a long-chain fatty acyl-CoA + 2 NADPH + 2 H(+) = a long-chain primary fatty alcohol + 2 NADP(+) + CoA</text>
        <dbReference type="Rhea" id="RHEA:52716"/>
        <dbReference type="ChEBI" id="CHEBI:15378"/>
        <dbReference type="ChEBI" id="CHEBI:57287"/>
        <dbReference type="ChEBI" id="CHEBI:57783"/>
        <dbReference type="ChEBI" id="CHEBI:58349"/>
        <dbReference type="ChEBI" id="CHEBI:77396"/>
        <dbReference type="ChEBI" id="CHEBI:83139"/>
        <dbReference type="EC" id="1.2.1.84"/>
    </reaction>
    <physiologicalReaction direction="left-to-right" evidence="12 14">
        <dbReference type="Rhea" id="RHEA:52717"/>
    </physiologicalReaction>
</comment>
<comment type="catalytic activity">
    <reaction evidence="3 4 8">
        <text>hexadecanoyl-CoA + 2 NADPH + 2 H(+) = hexadecan-1-ol + 2 NADP(+) + CoA</text>
        <dbReference type="Rhea" id="RHEA:36315"/>
        <dbReference type="ChEBI" id="CHEBI:15378"/>
        <dbReference type="ChEBI" id="CHEBI:16125"/>
        <dbReference type="ChEBI" id="CHEBI:57287"/>
        <dbReference type="ChEBI" id="CHEBI:57379"/>
        <dbReference type="ChEBI" id="CHEBI:57783"/>
        <dbReference type="ChEBI" id="CHEBI:58349"/>
        <dbReference type="EC" id="1.2.1.84"/>
    </reaction>
    <physiologicalReaction direction="left-to-right" evidence="12 13 14">
        <dbReference type="Rhea" id="RHEA:36316"/>
    </physiologicalReaction>
</comment>
<comment type="catalytic activity">
    <reaction evidence="8">
        <text>octadecanoyl-CoA + 2 NADPH + 2 H(+) = octadecan-1-ol + 2 NADP(+) + CoA</text>
        <dbReference type="Rhea" id="RHEA:36319"/>
        <dbReference type="ChEBI" id="CHEBI:15378"/>
        <dbReference type="ChEBI" id="CHEBI:32154"/>
        <dbReference type="ChEBI" id="CHEBI:57287"/>
        <dbReference type="ChEBI" id="CHEBI:57394"/>
        <dbReference type="ChEBI" id="CHEBI:57783"/>
        <dbReference type="ChEBI" id="CHEBI:58349"/>
        <dbReference type="EC" id="1.2.1.84"/>
    </reaction>
    <physiologicalReaction direction="left-to-right" evidence="14">
        <dbReference type="Rhea" id="RHEA:36320"/>
    </physiologicalReaction>
</comment>
<comment type="catalytic activity">
    <reaction evidence="8">
        <text>eicosanoyl-CoA + 2 NADPH + 2 H(+) = eicosan-1-ol + 2 NADP(+) + CoA</text>
        <dbReference type="Rhea" id="RHEA:81727"/>
        <dbReference type="ChEBI" id="CHEBI:15378"/>
        <dbReference type="ChEBI" id="CHEBI:57287"/>
        <dbReference type="ChEBI" id="CHEBI:57380"/>
        <dbReference type="ChEBI" id="CHEBI:57783"/>
        <dbReference type="ChEBI" id="CHEBI:58349"/>
        <dbReference type="ChEBI" id="CHEBI:75627"/>
    </reaction>
    <physiologicalReaction direction="left-to-right" evidence="14">
        <dbReference type="Rhea" id="RHEA:81728"/>
    </physiologicalReaction>
</comment>
<comment type="catalytic activity">
    <reaction evidence="1">
        <text>(9Z)-octadecenoyl-CoA + 2 NADPH + 2 H(+) = (9Z)-octadecen-1-ol + 2 NADP(+) + CoA</text>
        <dbReference type="Rhea" id="RHEA:36323"/>
        <dbReference type="ChEBI" id="CHEBI:15378"/>
        <dbReference type="ChEBI" id="CHEBI:57287"/>
        <dbReference type="ChEBI" id="CHEBI:57387"/>
        <dbReference type="ChEBI" id="CHEBI:57783"/>
        <dbReference type="ChEBI" id="CHEBI:58349"/>
        <dbReference type="ChEBI" id="CHEBI:73504"/>
    </reaction>
    <physiologicalReaction direction="left-to-right" evidence="1">
        <dbReference type="Rhea" id="RHEA:36324"/>
    </physiologicalReaction>
</comment>
<comment type="catalytic activity">
    <reaction evidence="1">
        <text>(9Z,12Z)-octadecadienoyl-CoA + 2 NADPH + 2 H(+) = (9Z,12Z)-octadecadien-1-ol + 2 NADP(+) + CoA</text>
        <dbReference type="Rhea" id="RHEA:36363"/>
        <dbReference type="ChEBI" id="CHEBI:15378"/>
        <dbReference type="ChEBI" id="CHEBI:57287"/>
        <dbReference type="ChEBI" id="CHEBI:57383"/>
        <dbReference type="ChEBI" id="CHEBI:57783"/>
        <dbReference type="ChEBI" id="CHEBI:58349"/>
        <dbReference type="ChEBI" id="CHEBI:73534"/>
    </reaction>
    <physiologicalReaction direction="left-to-right" evidence="1">
        <dbReference type="Rhea" id="RHEA:36364"/>
    </physiologicalReaction>
</comment>
<comment type="catalytic activity">
    <reaction evidence="8">
        <text>16-methylheptadecanoyl-CoA + 2 NADPH + 2 H(+) = 16-methylheptadecan-1-ol + 2 NADP(+) + CoA</text>
        <dbReference type="Rhea" id="RHEA:81763"/>
        <dbReference type="ChEBI" id="CHEBI:15378"/>
        <dbReference type="ChEBI" id="CHEBI:57287"/>
        <dbReference type="ChEBI" id="CHEBI:57783"/>
        <dbReference type="ChEBI" id="CHEBI:58349"/>
        <dbReference type="ChEBI" id="CHEBI:84911"/>
        <dbReference type="ChEBI" id="CHEBI:231998"/>
    </reaction>
    <physiologicalReaction direction="left-to-right" evidence="14">
        <dbReference type="Rhea" id="RHEA:81764"/>
    </physiologicalReaction>
</comment>
<comment type="catalytic activity">
    <reaction evidence="8">
        <text>18-methylnonadecanoyl-CoA + 2 NADPH + 2 H(+) = 18-methylnonadecan-1-ol + 2 NADP(+) + CoA</text>
        <dbReference type="Rhea" id="RHEA:81767"/>
        <dbReference type="ChEBI" id="CHEBI:15378"/>
        <dbReference type="ChEBI" id="CHEBI:57287"/>
        <dbReference type="ChEBI" id="CHEBI:57783"/>
        <dbReference type="ChEBI" id="CHEBI:58349"/>
        <dbReference type="ChEBI" id="CHEBI:84914"/>
        <dbReference type="ChEBI" id="CHEBI:231999"/>
    </reaction>
    <physiologicalReaction direction="left-to-right" evidence="14">
        <dbReference type="Rhea" id="RHEA:81768"/>
    </physiologicalReaction>
</comment>
<comment type="subunit">
    <text evidence="5">Interacts with PEX19; PEX19 mediates the targeting of FAR1 to peroxisomes.</text>
</comment>
<comment type="interaction">
    <interactant intactId="EBI-1045879">
        <id>Q8WVX9</id>
    </interactant>
    <interactant intactId="EBI-10988864">
        <id>P46379-2</id>
        <label>BAG6</label>
    </interactant>
    <organismsDiffer>false</organismsDiffer>
    <experiments>3</experiments>
</comment>
<comment type="interaction">
    <interactant intactId="EBI-1045879">
        <id>Q8WVX9</id>
    </interactant>
    <interactant intactId="EBI-21553822">
        <id>Q96A83-2</id>
        <label>COL26A1</label>
    </interactant>
    <organismsDiffer>false</organismsDiffer>
    <experiments>3</experiments>
</comment>
<comment type="interaction">
    <interactant intactId="EBI-1045879">
        <id>Q8WVX9</id>
    </interactant>
    <interactant intactId="EBI-948266">
        <id>O14901</id>
        <label>KLF11</label>
    </interactant>
    <organismsDiffer>false</organismsDiffer>
    <experiments>3</experiments>
</comment>
<comment type="subcellular location">
    <subcellularLocation>
        <location evidence="5">Peroxisome membrane</location>
        <topology evidence="5">Single-pass membrane protein</topology>
    </subcellularLocation>
</comment>
<comment type="induction">
    <text evidence="4 5">Down-regulated by ether lipids/plasmalogen that induce its degradation (at protein level).</text>
</comment>
<comment type="disease" evidence="6">
    <disease id="DI-04305">
        <name>Peroxisomal fatty acyl-CoA reductase 1 disorder</name>
        <acronym>PFCRD</acronym>
        <description>An autosomal recessive metabolic disorder clinically characterized by severe intellectual disability, early-onset epilepsy, microcephaly, congenital cataracts, growth retardation, and spasticity.</description>
        <dbReference type="MIM" id="616154"/>
    </disease>
    <text>The disease is caused by variants affecting the gene represented in this entry.</text>
</comment>
<comment type="disease" evidence="7">
    <disease id="DI-06115">
        <name>Cataracts, spastic paraparesis, and speech delay</name>
        <acronym>CSPSD</acronym>
        <description>An autosomal dominant disease characterized by bilateral cataracts apparent at birth or in infancy, spastic paraparesis, truncal hypotonia, delayed psychomotor development, and speech delay.</description>
        <dbReference type="MIM" id="619338"/>
    </disease>
    <text>The disease is caused by variants affecting the gene represented in this entry.</text>
</comment>
<comment type="similarity">
    <text evidence="11">Belongs to the fatty acyl-CoA reductase family.</text>
</comment>